<name>CTTB2_CALJA</name>
<dbReference type="EMBL" id="DP000014">
    <property type="protein sequence ID" value="ABA90398.1"/>
    <property type="molecule type" value="Genomic_DNA"/>
</dbReference>
<dbReference type="RefSeq" id="XP_002751825.1">
    <property type="nucleotide sequence ID" value="XM_002751779.3"/>
</dbReference>
<dbReference type="SMR" id="Q2QLF8"/>
<dbReference type="FunCoup" id="Q2QLF8">
    <property type="interactions" value="111"/>
</dbReference>
<dbReference type="STRING" id="9483.ENSCJAP00000008924"/>
<dbReference type="eggNOG" id="ENOG502QWG2">
    <property type="taxonomic scope" value="Eukaryota"/>
</dbReference>
<dbReference type="HOGENOM" id="CLU_004926_0_0_1"/>
<dbReference type="InParanoid" id="Q2QLF8"/>
<dbReference type="TreeFam" id="TF325130"/>
<dbReference type="Proteomes" id="UP000008225">
    <property type="component" value="Unplaced"/>
</dbReference>
<dbReference type="GO" id="GO:0015629">
    <property type="term" value="C:actin cytoskeleton"/>
    <property type="evidence" value="ECO:0007669"/>
    <property type="project" value="TreeGrafter"/>
</dbReference>
<dbReference type="GO" id="GO:0005938">
    <property type="term" value="C:cell cortex"/>
    <property type="evidence" value="ECO:0007669"/>
    <property type="project" value="UniProtKB-SubCell"/>
</dbReference>
<dbReference type="GO" id="GO:0043197">
    <property type="term" value="C:dendritic spine"/>
    <property type="evidence" value="ECO:0000250"/>
    <property type="project" value="UniProtKB"/>
</dbReference>
<dbReference type="GO" id="GO:0090443">
    <property type="term" value="C:FAR/SIN/STRIPAK complex"/>
    <property type="evidence" value="ECO:0000250"/>
    <property type="project" value="UniProtKB"/>
</dbReference>
<dbReference type="GO" id="GO:0051721">
    <property type="term" value="F:protein phosphatase 2A binding"/>
    <property type="evidence" value="ECO:0007669"/>
    <property type="project" value="TreeGrafter"/>
</dbReference>
<dbReference type="Gene3D" id="1.25.40.20">
    <property type="entry name" value="Ankyrin repeat-containing domain"/>
    <property type="match status" value="1"/>
</dbReference>
<dbReference type="InterPro" id="IPR002110">
    <property type="entry name" value="Ankyrin_rpt"/>
</dbReference>
<dbReference type="InterPro" id="IPR036770">
    <property type="entry name" value="Ankyrin_rpt-contain_sf"/>
</dbReference>
<dbReference type="InterPro" id="IPR050719">
    <property type="entry name" value="Cortactin-Actin_Reg"/>
</dbReference>
<dbReference type="InterPro" id="IPR019131">
    <property type="entry name" value="Cortactin-binding_p2_N"/>
</dbReference>
<dbReference type="PANTHER" id="PTHR23166:SF9">
    <property type="entry name" value="CTTNBP2 N-TERMINAL-LIKE PROTEIN"/>
    <property type="match status" value="1"/>
</dbReference>
<dbReference type="PANTHER" id="PTHR23166">
    <property type="entry name" value="FILAMIN/GPBP-INTERACTING PROTEIN"/>
    <property type="match status" value="1"/>
</dbReference>
<dbReference type="Pfam" id="PF25408">
    <property type="entry name" value="AAA_lid_NAV1"/>
    <property type="match status" value="1"/>
</dbReference>
<dbReference type="Pfam" id="PF12796">
    <property type="entry name" value="Ank_2"/>
    <property type="match status" value="2"/>
</dbReference>
<dbReference type="Pfam" id="PF09727">
    <property type="entry name" value="CortBP2"/>
    <property type="match status" value="1"/>
</dbReference>
<dbReference type="SMART" id="SM00248">
    <property type="entry name" value="ANK"/>
    <property type="match status" value="6"/>
</dbReference>
<dbReference type="SUPFAM" id="SSF48403">
    <property type="entry name" value="Ankyrin repeat"/>
    <property type="match status" value="1"/>
</dbReference>
<dbReference type="PROSITE" id="PS50297">
    <property type="entry name" value="ANK_REP_REGION"/>
    <property type="match status" value="1"/>
</dbReference>
<dbReference type="PROSITE" id="PS50088">
    <property type="entry name" value="ANK_REPEAT"/>
    <property type="match status" value="4"/>
</dbReference>
<evidence type="ECO:0000250" key="1">
    <source>
        <dbReference type="UniProtKB" id="B9EJA2"/>
    </source>
</evidence>
<evidence type="ECO:0000250" key="2">
    <source>
        <dbReference type="UniProtKB" id="Q2IBD4"/>
    </source>
</evidence>
<evidence type="ECO:0000250" key="3">
    <source>
        <dbReference type="UniProtKB" id="Q8WZ74"/>
    </source>
</evidence>
<evidence type="ECO:0000255" key="4"/>
<evidence type="ECO:0000256" key="5">
    <source>
        <dbReference type="SAM" id="MobiDB-lite"/>
    </source>
</evidence>
<keyword id="KW-0040">ANK repeat</keyword>
<keyword id="KW-0966">Cell projection</keyword>
<keyword id="KW-0175">Coiled coil</keyword>
<keyword id="KW-0963">Cytoplasm</keyword>
<keyword id="KW-0488">Methylation</keyword>
<keyword id="KW-0597">Phosphoprotein</keyword>
<keyword id="KW-1185">Reference proteome</keyword>
<keyword id="KW-0677">Repeat</keyword>
<keyword id="KW-0770">Synapse</keyword>
<feature type="chain" id="PRO_0000226999" description="Cortactin-binding protein 2">
    <location>
        <begin position="1"/>
        <end position="1662"/>
    </location>
</feature>
<feature type="repeat" description="ANK 1">
    <location>
        <begin position="708"/>
        <end position="738"/>
    </location>
</feature>
<feature type="repeat" description="ANK 2">
    <location>
        <begin position="742"/>
        <end position="771"/>
    </location>
</feature>
<feature type="repeat" description="ANK 3">
    <location>
        <begin position="775"/>
        <end position="804"/>
    </location>
</feature>
<feature type="repeat" description="ANK 4">
    <location>
        <begin position="808"/>
        <end position="837"/>
    </location>
</feature>
<feature type="repeat" description="ANK 5">
    <location>
        <begin position="841"/>
        <end position="870"/>
    </location>
</feature>
<feature type="repeat" description="ANK 6">
    <location>
        <begin position="911"/>
        <end position="941"/>
    </location>
</feature>
<feature type="region of interest" description="Disordered" evidence="5">
    <location>
        <begin position="1"/>
        <end position="23"/>
    </location>
</feature>
<feature type="region of interest" description="Disordered" evidence="5">
    <location>
        <begin position="202"/>
        <end position="235"/>
    </location>
</feature>
<feature type="region of interest" description="Disordered" evidence="5">
    <location>
        <begin position="365"/>
        <end position="439"/>
    </location>
</feature>
<feature type="region of interest" description="Disordered" evidence="5">
    <location>
        <begin position="453"/>
        <end position="477"/>
    </location>
</feature>
<feature type="region of interest" description="Disordered" evidence="5">
    <location>
        <begin position="498"/>
        <end position="615"/>
    </location>
</feature>
<feature type="region of interest" description="Disordered" evidence="5">
    <location>
        <begin position="871"/>
        <end position="897"/>
    </location>
</feature>
<feature type="region of interest" description="Disordered" evidence="5">
    <location>
        <begin position="1446"/>
        <end position="1473"/>
    </location>
</feature>
<feature type="region of interest" description="Disordered" evidence="5">
    <location>
        <begin position="1614"/>
        <end position="1662"/>
    </location>
</feature>
<feature type="coiled-coil region" evidence="4">
    <location>
        <begin position="118"/>
        <end position="275"/>
    </location>
</feature>
<feature type="compositionally biased region" description="Low complexity" evidence="5">
    <location>
        <begin position="385"/>
        <end position="395"/>
    </location>
</feature>
<feature type="compositionally biased region" description="Polar residues" evidence="5">
    <location>
        <begin position="404"/>
        <end position="421"/>
    </location>
</feature>
<feature type="compositionally biased region" description="Polar residues" evidence="5">
    <location>
        <begin position="516"/>
        <end position="529"/>
    </location>
</feature>
<feature type="compositionally biased region" description="Polar residues" evidence="5">
    <location>
        <begin position="582"/>
        <end position="592"/>
    </location>
</feature>
<feature type="compositionally biased region" description="Acidic residues" evidence="5">
    <location>
        <begin position="874"/>
        <end position="891"/>
    </location>
</feature>
<feature type="compositionally biased region" description="Low complexity" evidence="5">
    <location>
        <begin position="1623"/>
        <end position="1637"/>
    </location>
</feature>
<feature type="compositionally biased region" description="Basic and acidic residues" evidence="5">
    <location>
        <begin position="1644"/>
        <end position="1662"/>
    </location>
</feature>
<feature type="modified residue" description="Asymmetric dimethylarginine" evidence="1">
    <location>
        <position position="497"/>
    </location>
</feature>
<feature type="modified residue" description="Phosphoserine" evidence="3">
    <location>
        <position position="1523"/>
    </location>
</feature>
<proteinExistence type="inferred from homology"/>
<comment type="function">
    <text evidence="2">Regulates the dendritic spine distribution of CTTN/cortactin in hippocampal neurons, and thus controls dendritic spinogenesis and dendritic spine maintenance. Associates with the striatin-interacting phosphatase and kinase (STRIPAK) core complex to regulate dendritic spine distribution of the STRIPAK complex in hippocampal neurons.</text>
</comment>
<comment type="subunit">
    <text evidence="2">Interacts with CTTN/cortactin SH3 domain. Interacts with STRN, STRN4/zinedin and MOB4/phocein; this interactions mediate the association with the STRIPAK core complex and may regulate dendritic spine distribution of the STRIPAK complex in hippocampal neurons. Activation of glutamate receptors weakens the interaction with STRN and STRN4.</text>
</comment>
<comment type="subcellular location">
    <subcellularLocation>
        <location evidence="1">Cytoplasm</location>
        <location evidence="1">Cell cortex</location>
    </subcellularLocation>
    <subcellularLocation>
        <location evidence="2">Cell projection</location>
        <location evidence="2">Dendritic spine</location>
    </subcellularLocation>
    <text evidence="2">Remains associated with dendritic spines even after glutamate stimulation.</text>
</comment>
<organism>
    <name type="scientific">Callithrix jacchus</name>
    <name type="common">White-tufted-ear marmoset</name>
    <dbReference type="NCBI Taxonomy" id="9483"/>
    <lineage>
        <taxon>Eukaryota</taxon>
        <taxon>Metazoa</taxon>
        <taxon>Chordata</taxon>
        <taxon>Craniata</taxon>
        <taxon>Vertebrata</taxon>
        <taxon>Euteleostomi</taxon>
        <taxon>Mammalia</taxon>
        <taxon>Eutheria</taxon>
        <taxon>Euarchontoglires</taxon>
        <taxon>Primates</taxon>
        <taxon>Haplorrhini</taxon>
        <taxon>Platyrrhini</taxon>
        <taxon>Cebidae</taxon>
        <taxon>Callitrichinae</taxon>
        <taxon>Callithrix</taxon>
        <taxon>Callithrix</taxon>
    </lineage>
</organism>
<protein>
    <recommendedName>
        <fullName>Cortactin-binding protein 2</fullName>
        <shortName>CortBP2</shortName>
    </recommendedName>
</protein>
<accession>Q2QLF8</accession>
<reference key="1">
    <citation type="submission" date="2005-10" db="EMBL/GenBank/DDBJ databases">
        <title>NISC comparative sequencing initiative.</title>
        <authorList>
            <person name="Antonellis A."/>
            <person name="Ayele K."/>
            <person name="Benjamin B."/>
            <person name="Blakesley R.W."/>
            <person name="Boakye A."/>
            <person name="Bouffard G.G."/>
            <person name="Brinkley C."/>
            <person name="Brooks S."/>
            <person name="Chu G."/>
            <person name="Coleman H."/>
            <person name="Engle J."/>
            <person name="Gestole M."/>
            <person name="Greene A."/>
            <person name="Guan X."/>
            <person name="Gupta J."/>
            <person name="Haghighi P."/>
            <person name="Han J."/>
            <person name="Hansen N."/>
            <person name="Ho S.-L."/>
            <person name="Hu P."/>
            <person name="Hunter G."/>
            <person name="Hurle B."/>
            <person name="Idol J.R."/>
            <person name="Kwong P."/>
            <person name="Laric P."/>
            <person name="Larson S."/>
            <person name="Lee-Lin S.-Q."/>
            <person name="Legaspi R."/>
            <person name="Madden M."/>
            <person name="Maduro Q.L."/>
            <person name="Maduro V.B."/>
            <person name="Margulies E.H."/>
            <person name="Masiello C."/>
            <person name="Maskeri B."/>
            <person name="McDowell J."/>
            <person name="Mojidi H.A."/>
            <person name="Mullikin J.C."/>
            <person name="Oestreicher J.S."/>
            <person name="Park M."/>
            <person name="Portnoy M.E."/>
            <person name="Prasad A."/>
            <person name="Puri O."/>
            <person name="Reddix-Dugue N."/>
            <person name="Schandler K."/>
            <person name="Schueler M.G."/>
            <person name="Sison C."/>
            <person name="Stantripop S."/>
            <person name="Stephen E."/>
            <person name="Taye A."/>
            <person name="Thomas J.W."/>
            <person name="Thomas P.J."/>
            <person name="Tsipouri V."/>
            <person name="Ung L."/>
            <person name="Vogt J.L."/>
            <person name="Wetherby K.D."/>
            <person name="Young A."/>
            <person name="Green E.D."/>
        </authorList>
    </citation>
    <scope>NUCLEOTIDE SEQUENCE [LARGE SCALE GENOMIC DNA]</scope>
</reference>
<gene>
    <name type="primary">CTTNBP2</name>
    <name type="synonym">CORTBP2</name>
</gene>
<sequence>MATDGASCEPDLSRAPEDAAGAAAEAAKKEFDVDTLSKSELRMLLSVMEGELEARDLVIEALRARRKEVFIQERYGRFNLNDPFLALQRDYEAGAGDKEKPVCTNPLSILEAVMAHCRKMQERMSAQLAAAESRQKKLEMEKLQLQALEQEHKKLAARLEEERGKNKQVVLMLVKECKQLSGRVIEEAQKLEDIMAKLEEEKKKTNELEEELSAEKRRSSEMEAQMEKQLSEFDTEREQLRAKLNREEAHTTDLKEEIDKMKKMIEQLKRGSDSKPSLSLPRKTKDRRLVSISVGTEGTVMRSVACQTDLVTESADHVKKLPLTMPVKPSTGSPLASANAKGSVCSSAAMARPGIDRQASHGDLIGVSVPAFPPSSANRIEENGPSTGSTPDPTSSIPPLPSNAAPSTAQTPGITPQNSQAPPMHSLHSPCANASLHPGLNPRIQAARFRFQGNANDPDQNGNTTQSPPSRDVSPTSRDNLVAKQLARNTVTQALSRFTGPQAGAPPRPGAPPTGDVSTHPSVGRTSVKTHGIARVDRGNPPPIPPKKPGLSQTPSPPHPQLKVIIDSSRASNTGAKGDNKTVASPPSSLPQGNRVINEENLPKSSSPQLPPKPSIDLTVAPAGCAVSALATSQVGAWPAATPGLNQPACSDSSLIIPTTIAFCSSINPVSASSCRPGASDSLLVTASGWSPSLTPLLMSGGPAPLAGRPTLLQQAAAQGNVTLLSMLLNEEGLDINYSCEDGHSALYSAAKNGHTDCVRLLLSAEAQVNAADKNGFTPLCAAAAQGHFECVELLIAYDANINHAADGGQTPLYLACKNGNKECIRLLLEAGTDRSVKTTDGWTPVHAAVDTGNVDSLKLLMYHRVPAHGNSFSEEESESGVFDLDEGEESPEGKSKPVVTADFINHANREGWTAAHIAASKGFKNCLEILCRHGGLETERRDKCNRTVHDVATDDCKHLLENLNALKIPLRISVGEIEPSNYGSDDFECENTICALNIRKQTSWDDFSKAVSQALTNHFQAISSDGWWSLEDMTCNNTTDSNIGLSARSIRSITLGNVPWSVGQSFVQSPWDFMIKNKAEHITVLLSGPQEGCLSSVTYASMIPLKMMQNYLRLVEQYHNVIFHGPEGSLQDYIVHQLALCLKHRQMAAGFSCEIVKAEVDAGFSKKQLLDLFISSACLIPVKQSPVKKKIIIILENLEKSSLFELLRDFLAPLENRSTESPCTFHKGNGMSECYYFHENCFLMGTIAKACLQGSDLLVQQHFRWVQLRWDGEPMQGLLQRFLRRKVVNKFRGQVPPPCDPVCKIVDWALSVWRQLNSCLSRLGTPEALLGPKYFLSCPVVPGHAQVTVKWMSKLWNGVITPRVQEAILSRASVKRQAGFRQTIAKRHPSQGQQAVVKAALSILLNKAVLHGCPLPRAELEQHRADFKGGSFPLSIVSSYNSCSKKKGESGAWRKVNTSPRRKSGRFSLPTWNKPDLSTEGIKNKTLSQLNCNRNASLSKQMSLENDVSLTLNLDQRLSLGSDDEADLVKELQSMCSSKSESDISKIADSRDDLRMFDSSGNNPVFSATINNLRMPVSQKEVCPLSSHHTTECSNSKSKTELGVSRVKSFLPVPRSKVTQCSQNTKRSSSSSNTRQIEINNNSKEENWNLHKNEHLEKPNK</sequence>